<accession>B3NA78</accession>
<protein>
    <recommendedName>
        <fullName evidence="5">Small ribosomal subunit protein eS21</fullName>
    </recommendedName>
    <alternativeName>
        <fullName evidence="1">40S ribosomal protein S21</fullName>
    </alternativeName>
    <alternativeName>
        <fullName evidence="1">Overgrown hematopoietic organs at 23B</fullName>
    </alternativeName>
</protein>
<feature type="chain" id="PRO_0000395416" description="Small ribosomal subunit protein eS21">
    <location>
        <begin position="1"/>
        <end position="83"/>
    </location>
</feature>
<organism>
    <name type="scientific">Drosophila erecta</name>
    <name type="common">Fruit fly</name>
    <dbReference type="NCBI Taxonomy" id="7220"/>
    <lineage>
        <taxon>Eukaryota</taxon>
        <taxon>Metazoa</taxon>
        <taxon>Ecdysozoa</taxon>
        <taxon>Arthropoda</taxon>
        <taxon>Hexapoda</taxon>
        <taxon>Insecta</taxon>
        <taxon>Pterygota</taxon>
        <taxon>Neoptera</taxon>
        <taxon>Endopterygota</taxon>
        <taxon>Diptera</taxon>
        <taxon>Brachycera</taxon>
        <taxon>Muscomorpha</taxon>
        <taxon>Ephydroidea</taxon>
        <taxon>Drosophilidae</taxon>
        <taxon>Drosophila</taxon>
        <taxon>Sophophora</taxon>
    </lineage>
</organism>
<comment type="function">
    <text evidence="1">May be an associated component of the ribosome rather than a core structural subunit. May act as a translation initiation factor. Has a role in regulation of cell proliferation in the hematopoietic organs and the imaginal disks of larva (By similarity).</text>
</comment>
<comment type="subunit">
    <text evidence="1">Component of the 40S small ribosomal subunit. Interacts with sta.</text>
</comment>
<comment type="subcellular location">
    <subcellularLocation>
        <location evidence="2">Cytoplasm</location>
        <location evidence="2">Cytosol</location>
    </subcellularLocation>
    <subcellularLocation>
        <location evidence="2">Cytoplasm</location>
    </subcellularLocation>
    <subcellularLocation>
        <location evidence="3">Rough endoplasmic reticulum</location>
    </subcellularLocation>
    <text evidence="2 3">Detected on cytosolic polysomes (By similarity). Detected in ribosomes that are associated with the rough endoplasmic reticulum (By similarity).</text>
</comment>
<comment type="similarity">
    <text evidence="4">Belongs to the eukaryotic ribosomal protein eS21 family.</text>
</comment>
<dbReference type="EMBL" id="CH954177">
    <property type="protein sequence ID" value="EDV57541.1"/>
    <property type="molecule type" value="Genomic_DNA"/>
</dbReference>
<dbReference type="SMR" id="B3NA78"/>
<dbReference type="EnsemblMetazoa" id="FBtr0144946">
    <property type="protein sequence ID" value="FBpp0143438"/>
    <property type="gene ID" value="FBgn0117021"/>
</dbReference>
<dbReference type="EnsemblMetazoa" id="XM_001968446.3">
    <property type="protein sequence ID" value="XP_001968482.1"/>
    <property type="gene ID" value="LOC6541656"/>
</dbReference>
<dbReference type="GeneID" id="6541656"/>
<dbReference type="KEGG" id="der:6541656"/>
<dbReference type="CTD" id="6227"/>
<dbReference type="eggNOG" id="KOG3486">
    <property type="taxonomic scope" value="Eukaryota"/>
</dbReference>
<dbReference type="HOGENOM" id="CLU_167122_2_0_1"/>
<dbReference type="OMA" id="GESDACM"/>
<dbReference type="OrthoDB" id="278325at2759"/>
<dbReference type="PhylomeDB" id="B3NA78"/>
<dbReference type="ChiTaRS" id="RpS21">
    <property type="organism name" value="fly"/>
</dbReference>
<dbReference type="Proteomes" id="UP000008711">
    <property type="component" value="Unassembled WGS sequence"/>
</dbReference>
<dbReference type="GO" id="GO:0022626">
    <property type="term" value="C:cytosolic ribosome"/>
    <property type="evidence" value="ECO:0007669"/>
    <property type="project" value="EnsemblMetazoa"/>
</dbReference>
<dbReference type="GO" id="GO:1990904">
    <property type="term" value="C:ribonucleoprotein complex"/>
    <property type="evidence" value="ECO:0007669"/>
    <property type="project" value="UniProtKB-KW"/>
</dbReference>
<dbReference type="GO" id="GO:0005840">
    <property type="term" value="C:ribosome"/>
    <property type="evidence" value="ECO:0000250"/>
    <property type="project" value="UniProtKB"/>
</dbReference>
<dbReference type="GO" id="GO:0005791">
    <property type="term" value="C:rough endoplasmic reticulum"/>
    <property type="evidence" value="ECO:0007669"/>
    <property type="project" value="UniProtKB-SubCell"/>
</dbReference>
<dbReference type="GO" id="GO:0043022">
    <property type="term" value="F:ribosome binding"/>
    <property type="evidence" value="ECO:0000250"/>
    <property type="project" value="UniProtKB"/>
</dbReference>
<dbReference type="GO" id="GO:0003735">
    <property type="term" value="F:structural constituent of ribosome"/>
    <property type="evidence" value="ECO:0007669"/>
    <property type="project" value="EnsemblMetazoa"/>
</dbReference>
<dbReference type="GO" id="GO:0048542">
    <property type="term" value="P:lymph gland development"/>
    <property type="evidence" value="ECO:0007669"/>
    <property type="project" value="EnsemblMetazoa"/>
</dbReference>
<dbReference type="GO" id="GO:0042127">
    <property type="term" value="P:regulation of cell population proliferation"/>
    <property type="evidence" value="ECO:0000250"/>
    <property type="project" value="UniProtKB"/>
</dbReference>
<dbReference type="GO" id="GO:0006417">
    <property type="term" value="P:regulation of translation"/>
    <property type="evidence" value="ECO:0007669"/>
    <property type="project" value="UniProtKB-KW"/>
</dbReference>
<dbReference type="GO" id="GO:0006364">
    <property type="term" value="P:rRNA processing"/>
    <property type="evidence" value="ECO:0007669"/>
    <property type="project" value="UniProtKB-KW"/>
</dbReference>
<dbReference type="GO" id="GO:0006412">
    <property type="term" value="P:translation"/>
    <property type="evidence" value="ECO:0007669"/>
    <property type="project" value="InterPro"/>
</dbReference>
<dbReference type="FunFam" id="3.30.1230.20:FF:000001">
    <property type="entry name" value="40S ribosomal protein S21"/>
    <property type="match status" value="1"/>
</dbReference>
<dbReference type="Gene3D" id="3.30.1230.20">
    <property type="match status" value="1"/>
</dbReference>
<dbReference type="InterPro" id="IPR001931">
    <property type="entry name" value="Ribosomal_eS21"/>
</dbReference>
<dbReference type="InterPro" id="IPR018279">
    <property type="entry name" value="Ribosomal_eS21_CS"/>
</dbReference>
<dbReference type="InterPro" id="IPR038579">
    <property type="entry name" value="Ribosomal_eS21_sf"/>
</dbReference>
<dbReference type="PANTHER" id="PTHR10442">
    <property type="entry name" value="40S RIBOSOMAL PROTEIN S21"/>
    <property type="match status" value="1"/>
</dbReference>
<dbReference type="Pfam" id="PF01249">
    <property type="entry name" value="Ribosomal_S21e"/>
    <property type="match status" value="1"/>
</dbReference>
<dbReference type="PIRSF" id="PIRSF002148">
    <property type="entry name" value="Ribosomal_S21e"/>
    <property type="match status" value="1"/>
</dbReference>
<dbReference type="PROSITE" id="PS00996">
    <property type="entry name" value="RIBOSOMAL_S21E"/>
    <property type="match status" value="1"/>
</dbReference>
<reference evidence="6" key="1">
    <citation type="journal article" date="2007" name="Nature">
        <title>Evolution of genes and genomes on the Drosophila phylogeny.</title>
        <authorList>
            <consortium name="Drosophila 12 genomes consortium"/>
        </authorList>
    </citation>
    <scope>NUCLEOTIDE SEQUENCE [LARGE SCALE GENOMIC DNA]</scope>
    <source>
        <strain evidence="6">Tucson 14021-0224.01</strain>
    </source>
</reference>
<sequence length="83" mass="9167">MENDAGENVDLYVPRKCSASNRIIHAKDHASVQLSIVDVDPETGRQTDGSKTYAICGEIRRMGESDDCIVRLAKKDGIITKNF</sequence>
<evidence type="ECO:0000250" key="1">
    <source>
        <dbReference type="UniProtKB" id="O76927"/>
    </source>
</evidence>
<evidence type="ECO:0000250" key="2">
    <source>
        <dbReference type="UniProtKB" id="P63220"/>
    </source>
</evidence>
<evidence type="ECO:0000250" key="3">
    <source>
        <dbReference type="UniProtKB" id="P63221"/>
    </source>
</evidence>
<evidence type="ECO:0000255" key="4"/>
<evidence type="ECO:0000305" key="5"/>
<evidence type="ECO:0000312" key="6">
    <source>
        <dbReference type="EMBL" id="EDV57541.1"/>
    </source>
</evidence>
<keyword id="KW-0963">Cytoplasm</keyword>
<keyword id="KW-0217">Developmental protein</keyword>
<keyword id="KW-0256">Endoplasmic reticulum</keyword>
<keyword id="KW-0687">Ribonucleoprotein</keyword>
<keyword id="KW-0689">Ribosomal protein</keyword>
<keyword id="KW-0698">rRNA processing</keyword>
<keyword id="KW-0810">Translation regulation</keyword>
<gene>
    <name type="primary">RpS21</name>
    <name type="synonym">oho23B</name>
    <name type="ORF">GG24892</name>
</gene>
<proteinExistence type="inferred from homology"/>
<name>RS21_DROER</name>